<keyword id="KW-0002">3D-structure</keyword>
<keyword id="KW-0150">Chloroplast</keyword>
<keyword id="KW-0472">Membrane</keyword>
<keyword id="KW-0602">Photosynthesis</keyword>
<keyword id="KW-0603">Photosystem I</keyword>
<keyword id="KW-0934">Plastid</keyword>
<keyword id="KW-1185">Reference proteome</keyword>
<keyword id="KW-0793">Thylakoid</keyword>
<keyword id="KW-0809">Transit peptide</keyword>
<keyword id="KW-0812">Transmembrane</keyword>
<keyword id="KW-1133">Transmembrane helix</keyword>
<name>PSAH_MAIZE</name>
<comment type="function">
    <text>Possible role could be the docking of the LHC I antenna complex to the core complex.</text>
</comment>
<comment type="subcellular location">
    <subcellularLocation>
        <location evidence="1">Plastid</location>
        <location evidence="1">Chloroplast thylakoid membrane</location>
        <topology evidence="1">Single-pass membrane protein</topology>
    </subcellularLocation>
</comment>
<comment type="similarity">
    <text evidence="4">Belongs to the psaH family.</text>
</comment>
<dbReference type="EMBL" id="AF052076">
    <property type="protein sequence ID" value="AAC26196.1"/>
    <property type="molecule type" value="mRNA"/>
</dbReference>
<dbReference type="PIR" id="T01576">
    <property type="entry name" value="T01576"/>
</dbReference>
<dbReference type="RefSeq" id="NP_001104905.1">
    <property type="nucleotide sequence ID" value="NM_001111435.1"/>
</dbReference>
<dbReference type="PDB" id="5ZJI">
    <property type="method" value="EM"/>
    <property type="resolution" value="3.30 A"/>
    <property type="chains" value="H=1-142"/>
</dbReference>
<dbReference type="PDBsum" id="5ZJI"/>
<dbReference type="EMDB" id="EMD-6932"/>
<dbReference type="SMR" id="O65101"/>
<dbReference type="FunCoup" id="O65101">
    <property type="interactions" value="1426"/>
</dbReference>
<dbReference type="IntAct" id="O65101">
    <property type="interactions" value="1"/>
</dbReference>
<dbReference type="STRING" id="4577.O65101"/>
<dbReference type="PaxDb" id="4577-GRMZM2G451224_P01"/>
<dbReference type="EnsemblPlants" id="Zm00001eb295610_T001">
    <property type="protein sequence ID" value="Zm00001eb295610_P001"/>
    <property type="gene ID" value="Zm00001eb295610"/>
</dbReference>
<dbReference type="GeneID" id="541685"/>
<dbReference type="Gramene" id="Zm00001eb295610_T001">
    <property type="protein sequence ID" value="Zm00001eb295610_P001"/>
    <property type="gene ID" value="Zm00001eb295610"/>
</dbReference>
<dbReference type="KEGG" id="zma:541685"/>
<dbReference type="eggNOG" id="ENOG502RXI9">
    <property type="taxonomic scope" value="Eukaryota"/>
</dbReference>
<dbReference type="HOGENOM" id="CLU_152855_0_0_1"/>
<dbReference type="InParanoid" id="O65101"/>
<dbReference type="OMA" id="RNTTGQW"/>
<dbReference type="OrthoDB" id="496139at2759"/>
<dbReference type="Proteomes" id="UP000007305">
    <property type="component" value="Chromosome 6"/>
</dbReference>
<dbReference type="ExpressionAtlas" id="O65101">
    <property type="expression patterns" value="baseline and differential"/>
</dbReference>
<dbReference type="GO" id="GO:0009535">
    <property type="term" value="C:chloroplast thylakoid membrane"/>
    <property type="evidence" value="ECO:0007669"/>
    <property type="project" value="UniProtKB-SubCell"/>
</dbReference>
<dbReference type="GO" id="GO:0009538">
    <property type="term" value="C:photosystem I reaction center"/>
    <property type="evidence" value="ECO:0007669"/>
    <property type="project" value="InterPro"/>
</dbReference>
<dbReference type="GO" id="GO:0015979">
    <property type="term" value="P:photosynthesis"/>
    <property type="evidence" value="ECO:0007669"/>
    <property type="project" value="UniProtKB-KW"/>
</dbReference>
<dbReference type="FunFam" id="1.20.5.220:FF:000003">
    <property type="entry name" value="Photosystem I reaction center subunit VI"/>
    <property type="match status" value="1"/>
</dbReference>
<dbReference type="Gene3D" id="1.20.5.220">
    <property type="match status" value="1"/>
</dbReference>
<dbReference type="InterPro" id="IPR004928">
    <property type="entry name" value="PSI_PsaH"/>
</dbReference>
<dbReference type="PANTHER" id="PTHR34787">
    <property type="entry name" value="PHOTOSYSTEM I REACTION CENTER SUBUNIT VI-2, CHLOROPLASTIC"/>
    <property type="match status" value="1"/>
</dbReference>
<dbReference type="PANTHER" id="PTHR34787:SF1">
    <property type="entry name" value="PHOTOSYSTEM I REACTION CENTER SUBUNIT VI-2, CHLOROPLASTIC"/>
    <property type="match status" value="1"/>
</dbReference>
<dbReference type="Pfam" id="PF03244">
    <property type="entry name" value="PSI_PsaH"/>
    <property type="match status" value="1"/>
</dbReference>
<evidence type="ECO:0000250" key="1"/>
<evidence type="ECO:0000255" key="2"/>
<evidence type="ECO:0000256" key="3">
    <source>
        <dbReference type="SAM" id="MobiDB-lite"/>
    </source>
</evidence>
<evidence type="ECO:0000305" key="4"/>
<evidence type="ECO:0007829" key="5">
    <source>
        <dbReference type="PDB" id="5ZJI"/>
    </source>
</evidence>
<proteinExistence type="evidence at protein level"/>
<protein>
    <recommendedName>
        <fullName>Photosystem I reaction center subunit VI, chloroplastic</fullName>
        <shortName>PSI-H</shortName>
    </recommendedName>
    <alternativeName>
        <fullName>Light-harvesting complex I 11 kDa protein</fullName>
    </alternativeName>
</protein>
<feature type="transit peptide" description="Chloroplast" evidence="1">
    <location>
        <begin position="1"/>
        <end position="48"/>
    </location>
</feature>
<feature type="chain" id="PRO_0000029417" description="Photosystem I reaction center subunit VI, chloroplastic">
    <location>
        <begin position="49"/>
        <end position="142"/>
    </location>
</feature>
<feature type="transmembrane region" description="Helical" evidence="2">
    <location>
        <begin position="99"/>
        <end position="119"/>
    </location>
</feature>
<feature type="region of interest" description="Disordered" evidence="3">
    <location>
        <begin position="122"/>
        <end position="142"/>
    </location>
</feature>
<feature type="compositionally biased region" description="Pro residues" evidence="3">
    <location>
        <begin position="131"/>
        <end position="142"/>
    </location>
</feature>
<feature type="helix" evidence="5">
    <location>
        <begin position="61"/>
        <end position="64"/>
    </location>
</feature>
<feature type="helix" evidence="5">
    <location>
        <begin position="81"/>
        <end position="90"/>
    </location>
</feature>
<feature type="turn" evidence="5">
    <location>
        <begin position="93"/>
        <end position="95"/>
    </location>
</feature>
<feature type="helix" evidence="5">
    <location>
        <begin position="97"/>
        <end position="117"/>
    </location>
</feature>
<feature type="turn" evidence="5">
    <location>
        <begin position="121"/>
        <end position="123"/>
    </location>
</feature>
<feature type="turn" evidence="5">
    <location>
        <begin position="125"/>
        <end position="127"/>
    </location>
</feature>
<gene>
    <name type="primary">PSAH</name>
</gene>
<reference key="1">
    <citation type="online journal article" date="1998" name="Plant Gene Register">
        <title>Nucleotide sequence of cDNAs encoding the psaH and psaN subunits of the maize photosystem I complex.</title>
        <authorList>
            <person name="Heck D.A."/>
            <person name="Chitnis P.R."/>
        </authorList>
        <locator>PGR98-107</locator>
    </citation>
    <scope>NUCLEOTIDE SEQUENCE [MRNA]</scope>
    <source>
        <strain>cv. B73</strain>
    </source>
</reference>
<organism>
    <name type="scientific">Zea mays</name>
    <name type="common">Maize</name>
    <dbReference type="NCBI Taxonomy" id="4577"/>
    <lineage>
        <taxon>Eukaryota</taxon>
        <taxon>Viridiplantae</taxon>
        <taxon>Streptophyta</taxon>
        <taxon>Embryophyta</taxon>
        <taxon>Tracheophyta</taxon>
        <taxon>Spermatophyta</taxon>
        <taxon>Magnoliopsida</taxon>
        <taxon>Liliopsida</taxon>
        <taxon>Poales</taxon>
        <taxon>Poaceae</taxon>
        <taxon>PACMAD clade</taxon>
        <taxon>Panicoideae</taxon>
        <taxon>Andropogonodae</taxon>
        <taxon>Andropogoneae</taxon>
        <taxon>Tripsacinae</taxon>
        <taxon>Zea</taxon>
    </lineage>
</organism>
<accession>O65101</accession>
<sequence>MASLAAVSVKPVAIKGLAGSSISGRKLAVARPSARSIRRPRAAAVVAKYGDKSVYFDLDDIGNTTGQWDLYGSDAPSPYNPLQSKFFETFAAPFTKRGLLLKFLLLGGGSLLAYVSASASPDLLPIKKGPQEPPQPGPRGKI</sequence>